<comment type="function">
    <text evidence="6">May be involved in the polar growth of plant cells via transportation of RNAs.</text>
</comment>
<comment type="tissue specificity">
    <text evidence="3">Expressed at low levels in leaves, stems, flowers and siliques.</text>
</comment>
<comment type="disruption phenotype">
    <text evidence="3">No visible phenotype under normal growth conditions.</text>
</comment>
<sequence>MGRQVPSESLSLSEGCEVEISYKNNGNESVWYKAILEAKPNSIFKEELSVRLLKDDFSTPLNELRHKVLIRPIPPTNVQACIDIEIGTFVDADYKDAWWAGFVVKVIDDDKFWVCFDSPPDIIQFDRNHLRPTLEWVDEKIYSWWIIGSTRNSEFLKRLAEEPMFSPGTIVELCSKRDEGEVVWVPALVYKEFKENDEYRYIVKDKPLIGRSYKSRPSKTVDLRSLRPIPPPIRVKEYRLDEYIEVYHDGIGWRQGRVVKSEGGVMGSLFQNWCTLLLEATKKQLMFKQSDLRPLRVWEDGVWKTRESSLTQGSGDKTEVETQRKTFPKKTLPRNQNGSGNDSTLENENSNRKRKREENLCSGSSVEETNILFEKKLPVWKILESMEVFKTIPQSPHFRPLAEIREDSREMLAVGMMLTFSCLLEQVKALQHDEARSSFISLSNSFAELEKHGFNAQVAQLRINKLLTLRGMQSRKMDELKGAKKVTAEKESVKVENERKILELQRLNEEMAKEIAQSMSCEGKILQQLDNMKLEFQATASAPWPKWAFRST</sequence>
<name>DUF10_ARATH</name>
<keyword id="KW-0341">Growth regulation</keyword>
<keyword id="KW-1185">Reference proteome</keyword>
<keyword id="KW-0813">Transport</keyword>
<evidence type="ECO:0000255" key="1"/>
<evidence type="ECO:0000256" key="2">
    <source>
        <dbReference type="SAM" id="MobiDB-lite"/>
    </source>
</evidence>
<evidence type="ECO:0000269" key="3">
    <source>
    </source>
</evidence>
<evidence type="ECO:0000303" key="4">
    <source>
    </source>
</evidence>
<evidence type="ECO:0000305" key="5"/>
<evidence type="ECO:0000305" key="6">
    <source>
    </source>
</evidence>
<evidence type="ECO:0000312" key="7">
    <source>
        <dbReference type="Araport" id="AT5G23800"/>
    </source>
</evidence>
<evidence type="ECO:0000312" key="8">
    <source>
        <dbReference type="EMBL" id="BAB10053.1"/>
    </source>
</evidence>
<dbReference type="EMBL" id="AB005244">
    <property type="protein sequence ID" value="BAB10053.1"/>
    <property type="molecule type" value="Genomic_DNA"/>
</dbReference>
<dbReference type="EMBL" id="CP002688">
    <property type="protein sequence ID" value="AED93214.1"/>
    <property type="molecule type" value="Genomic_DNA"/>
</dbReference>
<dbReference type="SMR" id="Q9FFA0"/>
<dbReference type="FunCoup" id="Q9FFA0">
    <property type="interactions" value="170"/>
</dbReference>
<dbReference type="PaxDb" id="3702-AT5G23800.1"/>
<dbReference type="ProteomicsDB" id="221926"/>
<dbReference type="EnsemblPlants" id="AT5G23800.1">
    <property type="protein sequence ID" value="AT5G23800.1"/>
    <property type="gene ID" value="AT5G23800"/>
</dbReference>
<dbReference type="Gramene" id="AT5G23800.1">
    <property type="protein sequence ID" value="AT5G23800.1"/>
    <property type="gene ID" value="AT5G23800"/>
</dbReference>
<dbReference type="KEGG" id="ath:AT5G23800"/>
<dbReference type="Araport" id="AT5G23800"/>
<dbReference type="TAIR" id="AT5G23800">
    <property type="gene designation" value="DUF 10"/>
</dbReference>
<dbReference type="eggNOG" id="ENOG502QTQX">
    <property type="taxonomic scope" value="Eukaryota"/>
</dbReference>
<dbReference type="HOGENOM" id="CLU_007138_1_0_1"/>
<dbReference type="InParanoid" id="Q9FFA0"/>
<dbReference type="PhylomeDB" id="Q9FFA0"/>
<dbReference type="PRO" id="PR:Q9FFA0"/>
<dbReference type="Proteomes" id="UP000006548">
    <property type="component" value="Chromosome 5"/>
</dbReference>
<dbReference type="ExpressionAtlas" id="Q9FFA0">
    <property type="expression patterns" value="baseline and differential"/>
</dbReference>
<dbReference type="CDD" id="cd20405">
    <property type="entry name" value="Tudor_Agenet_AtDUF_rpt1_3"/>
    <property type="match status" value="1"/>
</dbReference>
<dbReference type="CDD" id="cd20406">
    <property type="entry name" value="Tudor_Agenet_AtDUF_rpt2_4"/>
    <property type="match status" value="1"/>
</dbReference>
<dbReference type="InterPro" id="IPR008395">
    <property type="entry name" value="Agenet-like_dom"/>
</dbReference>
<dbReference type="InterPro" id="IPR014002">
    <property type="entry name" value="Agenet_dom_plant"/>
</dbReference>
<dbReference type="InterPro" id="IPR007930">
    <property type="entry name" value="DUF724"/>
</dbReference>
<dbReference type="PANTHER" id="PTHR31917">
    <property type="entry name" value="AGENET DOMAIN-CONTAINING PROTEIN-RELATED"/>
    <property type="match status" value="1"/>
</dbReference>
<dbReference type="PANTHER" id="PTHR31917:SF50">
    <property type="entry name" value="DUF724 DOMAIN-CONTAINING PROTEIN 1-RELATED"/>
    <property type="match status" value="1"/>
</dbReference>
<dbReference type="Pfam" id="PF05641">
    <property type="entry name" value="Agenet"/>
    <property type="match status" value="3"/>
</dbReference>
<dbReference type="Pfam" id="PF05266">
    <property type="entry name" value="DUF724"/>
    <property type="match status" value="1"/>
</dbReference>
<dbReference type="SMART" id="SM00743">
    <property type="entry name" value="Agenet"/>
    <property type="match status" value="4"/>
</dbReference>
<reference key="1">
    <citation type="journal article" date="1997" name="DNA Res.">
        <title>Structural analysis of Arabidopsis thaliana chromosome 5. I. Sequence features of the 1.6 Mb regions covered by twenty physically assigned P1 clones.</title>
        <authorList>
            <person name="Sato S."/>
            <person name="Kotani H."/>
            <person name="Nakamura Y."/>
            <person name="Kaneko T."/>
            <person name="Asamizu E."/>
            <person name="Fukami M."/>
            <person name="Miyajima N."/>
            <person name="Tabata S."/>
        </authorList>
    </citation>
    <scope>NUCLEOTIDE SEQUENCE [LARGE SCALE GENOMIC DNA]</scope>
    <source>
        <strain>cv. Columbia</strain>
    </source>
</reference>
<reference key="2">
    <citation type="journal article" date="2017" name="Plant J.">
        <title>Araport11: a complete reannotation of the Arabidopsis thaliana reference genome.</title>
        <authorList>
            <person name="Cheng C.Y."/>
            <person name="Krishnakumar V."/>
            <person name="Chan A.P."/>
            <person name="Thibaud-Nissen F."/>
            <person name="Schobel S."/>
            <person name="Town C.D."/>
        </authorList>
    </citation>
    <scope>GENOME REANNOTATION</scope>
    <source>
        <strain>cv. Columbia</strain>
    </source>
</reference>
<reference key="3">
    <citation type="journal article" date="2010" name="Plant Mol. Biol.">
        <title>Characterization of DUF724 gene family in Arabidopsis thaliana.</title>
        <authorList>
            <person name="Cao X."/>
            <person name="Yang K.Z."/>
            <person name="Xia C."/>
            <person name="Zhang X.Q."/>
            <person name="Chen L.Q."/>
            <person name="Ye D."/>
        </authorList>
    </citation>
    <scope>FUNCTION</scope>
    <scope>GENE FAMILY</scope>
    <scope>NOMENCLATURE</scope>
    <scope>TISSUE SPECIFICITY</scope>
    <scope>DISRUPTION PHENOTYPE</scope>
</reference>
<feature type="chain" id="PRO_0000436428" description="DUF724 domain-containing protein 10">
    <location>
        <begin position="1"/>
        <end position="552"/>
    </location>
</feature>
<feature type="domain" description="DUF724" evidence="1">
    <location>
        <begin position="371"/>
        <end position="543"/>
    </location>
</feature>
<feature type="region of interest" description="Disordered" evidence="2">
    <location>
        <begin position="308"/>
        <end position="361"/>
    </location>
</feature>
<feature type="compositionally biased region" description="Polar residues" evidence="2">
    <location>
        <begin position="333"/>
        <end position="348"/>
    </location>
</feature>
<accession>Q9FFA0</accession>
<organism>
    <name type="scientific">Arabidopsis thaliana</name>
    <name type="common">Mouse-ear cress</name>
    <dbReference type="NCBI Taxonomy" id="3702"/>
    <lineage>
        <taxon>Eukaryota</taxon>
        <taxon>Viridiplantae</taxon>
        <taxon>Streptophyta</taxon>
        <taxon>Embryophyta</taxon>
        <taxon>Tracheophyta</taxon>
        <taxon>Spermatophyta</taxon>
        <taxon>Magnoliopsida</taxon>
        <taxon>eudicotyledons</taxon>
        <taxon>Gunneridae</taxon>
        <taxon>Pentapetalae</taxon>
        <taxon>rosids</taxon>
        <taxon>malvids</taxon>
        <taxon>Brassicales</taxon>
        <taxon>Brassicaceae</taxon>
        <taxon>Camelineae</taxon>
        <taxon>Arabidopsis</taxon>
    </lineage>
</organism>
<gene>
    <name evidence="4" type="primary">DUF10</name>
    <name evidence="7" type="ordered locus">At5g23800</name>
    <name evidence="8" type="ORF">MRO11.14</name>
</gene>
<proteinExistence type="evidence at transcript level"/>
<protein>
    <recommendedName>
        <fullName evidence="5">DUF724 domain-containing protein 10</fullName>
        <shortName evidence="4">AtDUF10</shortName>
    </recommendedName>
</protein>